<reference key="1">
    <citation type="journal article" date="2001" name="Nature">
        <title>Genome sequence of enterohaemorrhagic Escherichia coli O157:H7.</title>
        <authorList>
            <person name="Perna N.T."/>
            <person name="Plunkett G. III"/>
            <person name="Burland V."/>
            <person name="Mau B."/>
            <person name="Glasner J.D."/>
            <person name="Rose D.J."/>
            <person name="Mayhew G.F."/>
            <person name="Evans P.S."/>
            <person name="Gregor J."/>
            <person name="Kirkpatrick H.A."/>
            <person name="Posfai G."/>
            <person name="Hackett J."/>
            <person name="Klink S."/>
            <person name="Boutin A."/>
            <person name="Shao Y."/>
            <person name="Miller L."/>
            <person name="Grotbeck E.J."/>
            <person name="Davis N.W."/>
            <person name="Lim A."/>
            <person name="Dimalanta E.T."/>
            <person name="Potamousis K."/>
            <person name="Apodaca J."/>
            <person name="Anantharaman T.S."/>
            <person name="Lin J."/>
            <person name="Yen G."/>
            <person name="Schwartz D.C."/>
            <person name="Welch R.A."/>
            <person name="Blattner F.R."/>
        </authorList>
    </citation>
    <scope>NUCLEOTIDE SEQUENCE [LARGE SCALE GENOMIC DNA]</scope>
    <source>
        <strain>O157:H7 / EDL933 / ATCC 700927 / EHEC</strain>
    </source>
</reference>
<reference key="2">
    <citation type="journal article" date="2001" name="DNA Res.">
        <title>Complete genome sequence of enterohemorrhagic Escherichia coli O157:H7 and genomic comparison with a laboratory strain K-12.</title>
        <authorList>
            <person name="Hayashi T."/>
            <person name="Makino K."/>
            <person name="Ohnishi M."/>
            <person name="Kurokawa K."/>
            <person name="Ishii K."/>
            <person name="Yokoyama K."/>
            <person name="Han C.-G."/>
            <person name="Ohtsubo E."/>
            <person name="Nakayama K."/>
            <person name="Murata T."/>
            <person name="Tanaka M."/>
            <person name="Tobe T."/>
            <person name="Iida T."/>
            <person name="Takami H."/>
            <person name="Honda T."/>
            <person name="Sasakawa C."/>
            <person name="Ogasawara N."/>
            <person name="Yasunaga T."/>
            <person name="Kuhara S."/>
            <person name="Shiba T."/>
            <person name="Hattori M."/>
            <person name="Shinagawa H."/>
        </authorList>
    </citation>
    <scope>NUCLEOTIDE SEQUENCE [LARGE SCALE GENOMIC DNA]</scope>
    <source>
        <strain>O157:H7 / Sakai / RIMD 0509952 / EHEC</strain>
    </source>
</reference>
<name>RIHB_ECO57</name>
<keyword id="KW-0106">Calcium</keyword>
<keyword id="KW-0326">Glycosidase</keyword>
<keyword id="KW-0378">Hydrolase</keyword>
<keyword id="KW-0479">Metal-binding</keyword>
<keyword id="KW-1185">Reference proteome</keyword>
<evidence type="ECO:0000255" key="1">
    <source>
        <dbReference type="HAMAP-Rule" id="MF_01433"/>
    </source>
</evidence>
<protein>
    <recommendedName>
        <fullName evidence="1">Pyrimidine-specific ribonucleoside hydrolase RihB</fullName>
        <ecNumber evidence="1">3.2.2.8</ecNumber>
    </recommendedName>
    <alternativeName>
        <fullName evidence="1">Cytidine/uridine-specific hydrolase</fullName>
    </alternativeName>
</protein>
<proteinExistence type="inferred from homology"/>
<gene>
    <name evidence="1" type="primary">rihB</name>
    <name type="ordered locus">Z3419</name>
    <name type="ordered locus">ECs3054</name>
</gene>
<feature type="chain" id="PRO_0000206825" description="Pyrimidine-specific ribonucleoside hydrolase RihB">
    <location>
        <begin position="1"/>
        <end position="313"/>
    </location>
</feature>
<feature type="active site" description="Proton acceptor" evidence="1">
    <location>
        <position position="11"/>
    </location>
</feature>
<feature type="binding site" evidence="1">
    <location>
        <position position="11"/>
    </location>
    <ligand>
        <name>Ca(2+)</name>
        <dbReference type="ChEBI" id="CHEBI:29108"/>
    </ligand>
</feature>
<feature type="binding site" evidence="1">
    <location>
        <position position="16"/>
    </location>
    <ligand>
        <name>Ca(2+)</name>
        <dbReference type="ChEBI" id="CHEBI:29108"/>
    </ligand>
</feature>
<feature type="binding site" evidence="1">
    <location>
        <position position="124"/>
    </location>
    <ligand>
        <name>Ca(2+)</name>
        <dbReference type="ChEBI" id="CHEBI:29108"/>
    </ligand>
</feature>
<feature type="binding site" evidence="1">
    <location>
        <position position="227"/>
    </location>
    <ligand>
        <name>substrate</name>
    </ligand>
</feature>
<feature type="binding site" evidence="1">
    <location>
        <position position="239"/>
    </location>
    <ligand>
        <name>substrate</name>
    </ligand>
</feature>
<feature type="binding site" evidence="1">
    <location>
        <position position="240"/>
    </location>
    <ligand>
        <name>Ca(2+)</name>
        <dbReference type="ChEBI" id="CHEBI:29108"/>
    </ligand>
</feature>
<sequence>MEKRKIILDCDPGHDDAIAIMMAAKHPAIDLLGITIVAGNQTLDKTLINGLNVCQKLEINVPVYAGMPQPIMRQQIVADNIHGDTGLDGPVFEPLTRQAESTHAVKYIIDTLMASDGDITLVPVGPLSNIAVAMRMQPAILPKIREIVLMGGAYGTGNFTPSAEFNIFADPEAARVVFTSGVPLVMMGLDLTNQTVCTPDVIARMERAGGPAGELFSDIMNFTLKTQFENYGLAGGPVHDATCIGYLINPDGIKTQEMYVEVDVNSGPCYGRTVCDELGVLGKPANTKVGITIDSDWFWGLVEECVRGYIKTH</sequence>
<dbReference type="EC" id="3.2.2.8" evidence="1"/>
<dbReference type="EMBL" id="AE005174">
    <property type="protein sequence ID" value="AAG57300.1"/>
    <property type="molecule type" value="Genomic_DNA"/>
</dbReference>
<dbReference type="EMBL" id="BA000007">
    <property type="protein sequence ID" value="BAB36477.1"/>
    <property type="molecule type" value="Genomic_DNA"/>
</dbReference>
<dbReference type="PIR" id="F91010">
    <property type="entry name" value="F91010"/>
</dbReference>
<dbReference type="PIR" id="H85854">
    <property type="entry name" value="H85854"/>
</dbReference>
<dbReference type="RefSeq" id="NP_311081.1">
    <property type="nucleotide sequence ID" value="NC_002695.1"/>
</dbReference>
<dbReference type="RefSeq" id="WP_000415416.1">
    <property type="nucleotide sequence ID" value="NZ_VOAI01000001.1"/>
</dbReference>
<dbReference type="SMR" id="Q8XE94"/>
<dbReference type="STRING" id="155864.Z3419"/>
<dbReference type="GeneID" id="916758"/>
<dbReference type="KEGG" id="ece:Z3419"/>
<dbReference type="KEGG" id="ecs:ECs_3054"/>
<dbReference type="PATRIC" id="fig|386585.9.peg.3183"/>
<dbReference type="eggNOG" id="COG1957">
    <property type="taxonomic scope" value="Bacteria"/>
</dbReference>
<dbReference type="HOGENOM" id="CLU_036838_2_0_6"/>
<dbReference type="OMA" id="PNIKPFC"/>
<dbReference type="Proteomes" id="UP000000558">
    <property type="component" value="Chromosome"/>
</dbReference>
<dbReference type="Proteomes" id="UP000002519">
    <property type="component" value="Chromosome"/>
</dbReference>
<dbReference type="GO" id="GO:0005829">
    <property type="term" value="C:cytosol"/>
    <property type="evidence" value="ECO:0007669"/>
    <property type="project" value="TreeGrafter"/>
</dbReference>
<dbReference type="GO" id="GO:0005509">
    <property type="term" value="F:calcium ion binding"/>
    <property type="evidence" value="ECO:0007669"/>
    <property type="project" value="UniProtKB-UniRule"/>
</dbReference>
<dbReference type="GO" id="GO:0008477">
    <property type="term" value="F:purine nucleosidase activity"/>
    <property type="evidence" value="ECO:0007669"/>
    <property type="project" value="TreeGrafter"/>
</dbReference>
<dbReference type="GO" id="GO:0045437">
    <property type="term" value="F:uridine nucleosidase activity"/>
    <property type="evidence" value="ECO:0007669"/>
    <property type="project" value="UniProtKB-ARBA"/>
</dbReference>
<dbReference type="GO" id="GO:0006152">
    <property type="term" value="P:purine nucleoside catabolic process"/>
    <property type="evidence" value="ECO:0007669"/>
    <property type="project" value="TreeGrafter"/>
</dbReference>
<dbReference type="GO" id="GO:0006206">
    <property type="term" value="P:pyrimidine nucleobase metabolic process"/>
    <property type="evidence" value="ECO:0007669"/>
    <property type="project" value="UniProtKB-UniRule"/>
</dbReference>
<dbReference type="GO" id="GO:0046133">
    <property type="term" value="P:pyrimidine ribonucleoside catabolic process"/>
    <property type="evidence" value="ECO:0007669"/>
    <property type="project" value="InterPro"/>
</dbReference>
<dbReference type="CDD" id="cd02651">
    <property type="entry name" value="nuc_hydro_IU_UC_XIUA"/>
    <property type="match status" value="1"/>
</dbReference>
<dbReference type="FunFam" id="3.90.245.10:FF:000003">
    <property type="entry name" value="Pyrimidine-specific ribonucleoside hydrolase RihB"/>
    <property type="match status" value="1"/>
</dbReference>
<dbReference type="Gene3D" id="3.90.245.10">
    <property type="entry name" value="Ribonucleoside hydrolase-like"/>
    <property type="match status" value="1"/>
</dbReference>
<dbReference type="HAMAP" id="MF_01433">
    <property type="entry name" value="Pyrim_hydro_RihB"/>
    <property type="match status" value="1"/>
</dbReference>
<dbReference type="InterPro" id="IPR015910">
    <property type="entry name" value="I/U_nuclsd_hydro_CS"/>
</dbReference>
<dbReference type="InterPro" id="IPR001910">
    <property type="entry name" value="Inosine/uridine_hydrolase_dom"/>
</dbReference>
<dbReference type="InterPro" id="IPR023186">
    <property type="entry name" value="IUNH"/>
</dbReference>
<dbReference type="InterPro" id="IPR022977">
    <property type="entry name" value="Pyrim_hydro_RihB"/>
</dbReference>
<dbReference type="InterPro" id="IPR036452">
    <property type="entry name" value="Ribo_hydro-like"/>
</dbReference>
<dbReference type="NCBIfam" id="NF007417">
    <property type="entry name" value="PRK09955.1"/>
    <property type="match status" value="1"/>
</dbReference>
<dbReference type="PANTHER" id="PTHR12304">
    <property type="entry name" value="INOSINE-URIDINE PREFERRING NUCLEOSIDE HYDROLASE"/>
    <property type="match status" value="1"/>
</dbReference>
<dbReference type="PANTHER" id="PTHR12304:SF4">
    <property type="entry name" value="URIDINE NUCLEOSIDASE"/>
    <property type="match status" value="1"/>
</dbReference>
<dbReference type="Pfam" id="PF01156">
    <property type="entry name" value="IU_nuc_hydro"/>
    <property type="match status" value="1"/>
</dbReference>
<dbReference type="SUPFAM" id="SSF53590">
    <property type="entry name" value="Nucleoside hydrolase"/>
    <property type="match status" value="1"/>
</dbReference>
<dbReference type="PROSITE" id="PS01247">
    <property type="entry name" value="IUNH"/>
    <property type="match status" value="1"/>
</dbReference>
<organism>
    <name type="scientific">Escherichia coli O157:H7</name>
    <dbReference type="NCBI Taxonomy" id="83334"/>
    <lineage>
        <taxon>Bacteria</taxon>
        <taxon>Pseudomonadati</taxon>
        <taxon>Pseudomonadota</taxon>
        <taxon>Gammaproteobacteria</taxon>
        <taxon>Enterobacterales</taxon>
        <taxon>Enterobacteriaceae</taxon>
        <taxon>Escherichia</taxon>
    </lineage>
</organism>
<accession>Q8XE94</accession>
<accession>Q7AC81</accession>
<comment type="function">
    <text evidence="1">Hydrolyzes cytidine or uridine to ribose and cytosine or uracil, respectively. Has a clear preference for cytidine over uridine. Strictly specific for ribonucleosides.</text>
</comment>
<comment type="catalytic activity">
    <reaction evidence="1">
        <text>a pyrimidine ribonucleoside + H2O = a pyrimidine nucleobase + D-ribose</text>
        <dbReference type="Rhea" id="RHEA:56816"/>
        <dbReference type="ChEBI" id="CHEBI:15377"/>
        <dbReference type="ChEBI" id="CHEBI:26432"/>
        <dbReference type="ChEBI" id="CHEBI:47013"/>
        <dbReference type="ChEBI" id="CHEBI:141014"/>
        <dbReference type="EC" id="3.2.2.8"/>
    </reaction>
</comment>
<comment type="cofactor">
    <cofactor evidence="1">
        <name>Ca(2+)</name>
        <dbReference type="ChEBI" id="CHEBI:29108"/>
    </cofactor>
    <text evidence="1">Binds 1 Ca(2+) ion per monomer.</text>
</comment>
<comment type="subunit">
    <text evidence="1">Homotetramer.</text>
</comment>
<comment type="similarity">
    <text evidence="1">Belongs to the IUNH family. RihB subfamily.</text>
</comment>